<comment type="function">
    <text evidence="2">Catalyzes the reversible phosphorolytic breakdown of the N-glycosidic bond in the beta-(deoxy)ribonucleoside molecules, with the formation of the corresponding free purine bases and pentose-1-phosphate.</text>
</comment>
<comment type="catalytic activity">
    <reaction evidence="2">
        <text>a purine D-ribonucleoside + phosphate = a purine nucleobase + alpha-D-ribose 1-phosphate</text>
        <dbReference type="Rhea" id="RHEA:19805"/>
        <dbReference type="ChEBI" id="CHEBI:26386"/>
        <dbReference type="ChEBI" id="CHEBI:43474"/>
        <dbReference type="ChEBI" id="CHEBI:57720"/>
        <dbReference type="ChEBI" id="CHEBI:142355"/>
        <dbReference type="EC" id="2.4.2.1"/>
    </reaction>
</comment>
<comment type="catalytic activity">
    <reaction evidence="2">
        <text>a purine 2'-deoxy-D-ribonucleoside + phosphate = a purine nucleobase + 2-deoxy-alpha-D-ribose 1-phosphate</text>
        <dbReference type="Rhea" id="RHEA:36431"/>
        <dbReference type="ChEBI" id="CHEBI:26386"/>
        <dbReference type="ChEBI" id="CHEBI:43474"/>
        <dbReference type="ChEBI" id="CHEBI:57259"/>
        <dbReference type="ChEBI" id="CHEBI:142361"/>
        <dbReference type="EC" id="2.4.2.1"/>
    </reaction>
</comment>
<comment type="subunit">
    <text evidence="2">Homohexamer; trimer of homodimers.</text>
</comment>
<comment type="similarity">
    <text evidence="2">Belongs to the PNP/UDP phosphorylase family.</text>
</comment>
<reference key="1">
    <citation type="journal article" date="1997" name="Nature">
        <title>The complete genome sequence of the gastric pathogen Helicobacter pylori.</title>
        <authorList>
            <person name="Tomb J.-F."/>
            <person name="White O."/>
            <person name="Kerlavage A.R."/>
            <person name="Clayton R.A."/>
            <person name="Sutton G.G."/>
            <person name="Fleischmann R.D."/>
            <person name="Ketchum K.A."/>
            <person name="Klenk H.-P."/>
            <person name="Gill S.R."/>
            <person name="Dougherty B.A."/>
            <person name="Nelson K.E."/>
            <person name="Quackenbush J."/>
            <person name="Zhou L."/>
            <person name="Kirkness E.F."/>
            <person name="Peterson S.N."/>
            <person name="Loftus B.J."/>
            <person name="Richardson D.L."/>
            <person name="Dodson R.J."/>
            <person name="Khalak H.G."/>
            <person name="Glodek A."/>
            <person name="McKenney K."/>
            <person name="FitzGerald L.M."/>
            <person name="Lee N."/>
            <person name="Adams M.D."/>
            <person name="Hickey E.K."/>
            <person name="Berg D.E."/>
            <person name="Gocayne J.D."/>
            <person name="Utterback T.R."/>
            <person name="Peterson J.D."/>
            <person name="Kelley J.M."/>
            <person name="Cotton M.D."/>
            <person name="Weidman J.F."/>
            <person name="Fujii C."/>
            <person name="Bowman C."/>
            <person name="Watthey L."/>
            <person name="Wallin E."/>
            <person name="Hayes W.S."/>
            <person name="Borodovsky M."/>
            <person name="Karp P.D."/>
            <person name="Smith H.O."/>
            <person name="Fraser C.M."/>
            <person name="Venter J.C."/>
        </authorList>
    </citation>
    <scope>NUCLEOTIDE SEQUENCE [LARGE SCALE GENOMIC DNA]</scope>
    <source>
        <strain>ATCC 700392 / 26695</strain>
    </source>
</reference>
<dbReference type="EC" id="2.4.2.1" evidence="2"/>
<dbReference type="EMBL" id="AE000511">
    <property type="protein sequence ID" value="AAD08222.1"/>
    <property type="molecule type" value="Genomic_DNA"/>
</dbReference>
<dbReference type="PIR" id="B64667">
    <property type="entry name" value="B64667"/>
</dbReference>
<dbReference type="RefSeq" id="NP_207969.1">
    <property type="nucleotide sequence ID" value="NC_000915.1"/>
</dbReference>
<dbReference type="RefSeq" id="WP_000187711.1">
    <property type="nucleotide sequence ID" value="NC_018939.1"/>
</dbReference>
<dbReference type="PDB" id="5LU0">
    <property type="method" value="X-ray"/>
    <property type="resolution" value="1.73 A"/>
    <property type="chains" value="A/B/C/D/E/F=1-233"/>
</dbReference>
<dbReference type="PDB" id="5MX6">
    <property type="method" value="X-ray"/>
    <property type="resolution" value="2.41 A"/>
    <property type="chains" value="A/B/C/D/E/F=1-233"/>
</dbReference>
<dbReference type="PDB" id="5MX8">
    <property type="method" value="X-ray"/>
    <property type="resolution" value="2.40 A"/>
    <property type="chains" value="A=1-233"/>
</dbReference>
<dbReference type="PDB" id="6F4W">
    <property type="method" value="X-ray"/>
    <property type="resolution" value="2.29 A"/>
    <property type="chains" value="A/B/C/D/E/F=1-233"/>
</dbReference>
<dbReference type="PDB" id="6F4X">
    <property type="method" value="X-ray"/>
    <property type="resolution" value="1.69 A"/>
    <property type="chains" value="A/B/C/D/E/F=1-233"/>
</dbReference>
<dbReference type="PDB" id="6F52">
    <property type="method" value="X-ray"/>
    <property type="resolution" value="2.00 A"/>
    <property type="chains" value="A/B/C/D/E/F=1-233"/>
</dbReference>
<dbReference type="PDB" id="6F5A">
    <property type="method" value="X-ray"/>
    <property type="resolution" value="2.20 A"/>
    <property type="chains" value="A/B/C/D/E/F=1-233"/>
</dbReference>
<dbReference type="PDB" id="6F5I">
    <property type="method" value="X-ray"/>
    <property type="resolution" value="2.30 A"/>
    <property type="chains" value="A/B/C/D/E/F=1-233"/>
</dbReference>
<dbReference type="PDB" id="6G7X">
    <property type="method" value="X-ray"/>
    <property type="resolution" value="1.76 A"/>
    <property type="chains" value="A/B/C/D/E/F=1-233"/>
</dbReference>
<dbReference type="PDB" id="7OOY">
    <property type="method" value="X-ray"/>
    <property type="resolution" value="1.90 A"/>
    <property type="chains" value="A/B=1-233"/>
</dbReference>
<dbReference type="PDB" id="7OOZ">
    <property type="method" value="X-ray"/>
    <property type="resolution" value="1.70 A"/>
    <property type="chains" value="A/B=1-233"/>
</dbReference>
<dbReference type="PDB" id="7OP9">
    <property type="method" value="X-ray"/>
    <property type="resolution" value="1.50 A"/>
    <property type="chains" value="A/B/C/D/E/F/G/H/I/J/K/L=1-233"/>
</dbReference>
<dbReference type="PDB" id="7OPA">
    <property type="method" value="X-ray"/>
    <property type="resolution" value="2.00 A"/>
    <property type="chains" value="A/B/C/D/E/F/G/H/I/J/K/L=1-233"/>
</dbReference>
<dbReference type="PDBsum" id="5LU0"/>
<dbReference type="PDBsum" id="5MX6"/>
<dbReference type="PDBsum" id="5MX8"/>
<dbReference type="PDBsum" id="6F4W"/>
<dbReference type="PDBsum" id="6F4X"/>
<dbReference type="PDBsum" id="6F52"/>
<dbReference type="PDBsum" id="6F5A"/>
<dbReference type="PDBsum" id="6F5I"/>
<dbReference type="PDBsum" id="6G7X"/>
<dbReference type="PDBsum" id="7OOY"/>
<dbReference type="PDBsum" id="7OOZ"/>
<dbReference type="PDBsum" id="7OP9"/>
<dbReference type="PDBsum" id="7OPA"/>
<dbReference type="SMR" id="P56463"/>
<dbReference type="FunCoup" id="P56463">
    <property type="interactions" value="186"/>
</dbReference>
<dbReference type="IntAct" id="P56463">
    <property type="interactions" value="1"/>
</dbReference>
<dbReference type="STRING" id="85962.HP_1178"/>
<dbReference type="PaxDb" id="85962-C694_06090"/>
<dbReference type="EnsemblBacteria" id="AAD08222">
    <property type="protein sequence ID" value="AAD08222"/>
    <property type="gene ID" value="HP_1178"/>
</dbReference>
<dbReference type="KEGG" id="heo:C694_06090"/>
<dbReference type="KEGG" id="hpy:HP_1178"/>
<dbReference type="PATRIC" id="fig|85962.47.peg.1266"/>
<dbReference type="eggNOG" id="COG0813">
    <property type="taxonomic scope" value="Bacteria"/>
</dbReference>
<dbReference type="InParanoid" id="P56463"/>
<dbReference type="OrthoDB" id="9782889at2"/>
<dbReference type="PhylomeDB" id="P56463"/>
<dbReference type="BRENDA" id="2.4.2.1">
    <property type="organism ID" value="2604"/>
</dbReference>
<dbReference type="Proteomes" id="UP000000429">
    <property type="component" value="Chromosome"/>
</dbReference>
<dbReference type="GO" id="GO:0005829">
    <property type="term" value="C:cytosol"/>
    <property type="evidence" value="ECO:0000318"/>
    <property type="project" value="GO_Central"/>
</dbReference>
<dbReference type="GO" id="GO:0004731">
    <property type="term" value="F:purine-nucleoside phosphorylase activity"/>
    <property type="evidence" value="ECO:0000318"/>
    <property type="project" value="GO_Central"/>
</dbReference>
<dbReference type="GO" id="GO:0006152">
    <property type="term" value="P:purine nucleoside catabolic process"/>
    <property type="evidence" value="ECO:0000318"/>
    <property type="project" value="GO_Central"/>
</dbReference>
<dbReference type="CDD" id="cd09006">
    <property type="entry name" value="PNP_EcPNPI-like"/>
    <property type="match status" value="1"/>
</dbReference>
<dbReference type="Gene3D" id="3.40.50.1580">
    <property type="entry name" value="Nucleoside phosphorylase domain"/>
    <property type="match status" value="1"/>
</dbReference>
<dbReference type="HAMAP" id="MF_01627">
    <property type="entry name" value="Pur_nucleosid_phosp"/>
    <property type="match status" value="1"/>
</dbReference>
<dbReference type="InterPro" id="IPR004402">
    <property type="entry name" value="DeoD-type"/>
</dbReference>
<dbReference type="InterPro" id="IPR018016">
    <property type="entry name" value="Nucleoside_phosphorylase_CS"/>
</dbReference>
<dbReference type="InterPro" id="IPR000845">
    <property type="entry name" value="Nucleoside_phosphorylase_d"/>
</dbReference>
<dbReference type="InterPro" id="IPR035994">
    <property type="entry name" value="Nucleoside_phosphorylase_sf"/>
</dbReference>
<dbReference type="NCBIfam" id="TIGR00107">
    <property type="entry name" value="deoD"/>
    <property type="match status" value="1"/>
</dbReference>
<dbReference type="NCBIfam" id="NF004489">
    <property type="entry name" value="PRK05819.1"/>
    <property type="match status" value="1"/>
</dbReference>
<dbReference type="PANTHER" id="PTHR43691:SF11">
    <property type="entry name" value="FI09636P-RELATED"/>
    <property type="match status" value="1"/>
</dbReference>
<dbReference type="PANTHER" id="PTHR43691">
    <property type="entry name" value="URIDINE PHOSPHORYLASE"/>
    <property type="match status" value="1"/>
</dbReference>
<dbReference type="Pfam" id="PF01048">
    <property type="entry name" value="PNP_UDP_1"/>
    <property type="match status" value="1"/>
</dbReference>
<dbReference type="SUPFAM" id="SSF53167">
    <property type="entry name" value="Purine and uridine phosphorylases"/>
    <property type="match status" value="1"/>
</dbReference>
<dbReference type="PROSITE" id="PS01232">
    <property type="entry name" value="PNP_UDP_1"/>
    <property type="match status" value="1"/>
</dbReference>
<name>DEOD_HELPY</name>
<feature type="chain" id="PRO_0000063137" description="Purine nucleoside phosphorylase DeoD-type">
    <location>
        <begin position="1"/>
        <end position="233"/>
    </location>
</feature>
<feature type="active site" description="Proton donor" evidence="2">
    <location>
        <position position="204"/>
    </location>
</feature>
<feature type="binding site" evidence="1">
    <location>
        <position position="4"/>
    </location>
    <ligand>
        <name>a purine D-ribonucleoside</name>
        <dbReference type="ChEBI" id="CHEBI:142355"/>
        <note>ligand shared between dimeric partners</note>
    </ligand>
</feature>
<feature type="binding site" description="in other chain" evidence="1">
    <location>
        <position position="20"/>
    </location>
    <ligand>
        <name>phosphate</name>
        <dbReference type="ChEBI" id="CHEBI:43474"/>
        <note>ligand shared between dimeric partners</note>
    </ligand>
</feature>
<feature type="binding site" description="in other chain" evidence="1">
    <location>
        <position position="24"/>
    </location>
    <ligand>
        <name>phosphate</name>
        <dbReference type="ChEBI" id="CHEBI:43474"/>
        <note>ligand shared between dimeric partners</note>
    </ligand>
</feature>
<feature type="binding site" evidence="1">
    <location>
        <position position="43"/>
    </location>
    <ligand>
        <name>phosphate</name>
        <dbReference type="ChEBI" id="CHEBI:43474"/>
        <note>ligand shared between dimeric partners</note>
    </ligand>
</feature>
<feature type="binding site" description="in other chain" evidence="1">
    <location>
        <begin position="87"/>
        <end position="90"/>
    </location>
    <ligand>
        <name>phosphate</name>
        <dbReference type="ChEBI" id="CHEBI:43474"/>
        <note>ligand shared between dimeric partners</note>
    </ligand>
</feature>
<feature type="binding site" description="in other chain" evidence="1">
    <location>
        <begin position="179"/>
        <end position="181"/>
    </location>
    <ligand>
        <name>a purine D-ribonucleoside</name>
        <dbReference type="ChEBI" id="CHEBI:142355"/>
        <note>ligand shared between dimeric partners</note>
    </ligand>
</feature>
<feature type="binding site" description="in other chain" evidence="1">
    <location>
        <begin position="203"/>
        <end position="204"/>
    </location>
    <ligand>
        <name>a purine D-ribonucleoside</name>
        <dbReference type="ChEBI" id="CHEBI:142355"/>
        <note>ligand shared between dimeric partners</note>
    </ligand>
</feature>
<feature type="site" description="Important for catalytic activity" evidence="2">
    <location>
        <position position="217"/>
    </location>
</feature>
<feature type="strand" evidence="3">
    <location>
        <begin position="14"/>
        <end position="20"/>
    </location>
</feature>
<feature type="helix" evidence="3">
    <location>
        <begin position="22"/>
        <end position="32"/>
    </location>
</feature>
<feature type="strand" evidence="3">
    <location>
        <begin position="34"/>
        <end position="40"/>
    </location>
</feature>
<feature type="helix" evidence="3">
    <location>
        <begin position="42"/>
        <end position="44"/>
    </location>
</feature>
<feature type="strand" evidence="3">
    <location>
        <begin position="47"/>
        <end position="52"/>
    </location>
</feature>
<feature type="strand" evidence="3">
    <location>
        <begin position="55"/>
        <end position="61"/>
    </location>
</feature>
<feature type="helix" evidence="3">
    <location>
        <begin position="66"/>
        <end position="78"/>
    </location>
</feature>
<feature type="strand" evidence="3">
    <location>
        <begin position="84"/>
        <end position="87"/>
    </location>
</feature>
<feature type="strand" evidence="3">
    <location>
        <begin position="90"/>
        <end position="93"/>
    </location>
</feature>
<feature type="strand" evidence="3">
    <location>
        <begin position="103"/>
        <end position="112"/>
    </location>
</feature>
<feature type="helix" evidence="3">
    <location>
        <begin position="115"/>
        <end position="119"/>
    </location>
</feature>
<feature type="turn" evidence="3">
    <location>
        <begin position="120"/>
        <end position="122"/>
    </location>
</feature>
<feature type="helix" evidence="3">
    <location>
        <begin position="131"/>
        <end position="144"/>
    </location>
</feature>
<feature type="strand" evidence="3">
    <location>
        <begin position="149"/>
        <end position="155"/>
    </location>
</feature>
<feature type="helix" evidence="3">
    <location>
        <begin position="164"/>
        <end position="166"/>
    </location>
</feature>
<feature type="helix" evidence="3">
    <location>
        <begin position="167"/>
        <end position="172"/>
    </location>
</feature>
<feature type="strand" evidence="3">
    <location>
        <begin position="175"/>
        <end position="181"/>
    </location>
</feature>
<feature type="helix" evidence="3">
    <location>
        <begin position="182"/>
        <end position="191"/>
    </location>
</feature>
<feature type="strand" evidence="3">
    <location>
        <begin position="195"/>
        <end position="205"/>
    </location>
</feature>
<feature type="turn" evidence="3">
    <location>
        <begin position="206"/>
        <end position="208"/>
    </location>
</feature>
<feature type="helix" evidence="3">
    <location>
        <begin position="214"/>
        <end position="232"/>
    </location>
</feature>
<sequence>MTPHINAKIGDFYPQCLLCGDPLRVSYIAKKFLQDAKEITNVRNMLGFSGKYKGRGISLMGHGMGIASCTIYVTELIKTYQVKELLRIGTCGAISPKVGLKDIIMATGASTDSKTNRVRFLNHDLSATPDFELSLRAYQTAKRLGIDLKVGNVFSSDFFYSFETHAFDLMAKYNHLAIEMEAAGLYATAMELNAKALCLCSVSDHLITKEALSPKERVESFDNMIILALEMMS</sequence>
<protein>
    <recommendedName>
        <fullName evidence="2">Purine nucleoside phosphorylase DeoD-type</fullName>
        <shortName evidence="2">PNP</shortName>
        <ecNumber evidence="2">2.4.2.1</ecNumber>
    </recommendedName>
</protein>
<accession>P56463</accession>
<evidence type="ECO:0000250" key="1">
    <source>
        <dbReference type="UniProtKB" id="P50389"/>
    </source>
</evidence>
<evidence type="ECO:0000255" key="2">
    <source>
        <dbReference type="HAMAP-Rule" id="MF_01627"/>
    </source>
</evidence>
<evidence type="ECO:0007829" key="3">
    <source>
        <dbReference type="PDB" id="7OP9"/>
    </source>
</evidence>
<gene>
    <name evidence="2" type="primary">deoD</name>
    <name type="ordered locus">HP_1178</name>
</gene>
<proteinExistence type="evidence at protein level"/>
<keyword id="KW-0002">3D-structure</keyword>
<keyword id="KW-0328">Glycosyltransferase</keyword>
<keyword id="KW-1185">Reference proteome</keyword>
<keyword id="KW-0808">Transferase</keyword>
<organism>
    <name type="scientific">Helicobacter pylori (strain ATCC 700392 / 26695)</name>
    <name type="common">Campylobacter pylori</name>
    <dbReference type="NCBI Taxonomy" id="85962"/>
    <lineage>
        <taxon>Bacteria</taxon>
        <taxon>Pseudomonadati</taxon>
        <taxon>Campylobacterota</taxon>
        <taxon>Epsilonproteobacteria</taxon>
        <taxon>Campylobacterales</taxon>
        <taxon>Helicobacteraceae</taxon>
        <taxon>Helicobacter</taxon>
    </lineage>
</organism>